<evidence type="ECO:0000250" key="1"/>
<evidence type="ECO:0000250" key="2">
    <source>
        <dbReference type="UniProtKB" id="O22317"/>
    </source>
</evidence>
<evidence type="ECO:0000255" key="3"/>
<evidence type="ECO:0000305" key="4"/>
<reference key="1">
    <citation type="journal article" date="2000" name="Nature">
        <title>Sequence and analysis of chromosome 1 of the plant Arabidopsis thaliana.</title>
        <authorList>
            <person name="Theologis A."/>
            <person name="Ecker J.R."/>
            <person name="Palm C.J."/>
            <person name="Federspiel N.A."/>
            <person name="Kaul S."/>
            <person name="White O."/>
            <person name="Alonso J."/>
            <person name="Altafi H."/>
            <person name="Araujo R."/>
            <person name="Bowman C.L."/>
            <person name="Brooks S.Y."/>
            <person name="Buehler E."/>
            <person name="Chan A."/>
            <person name="Chao Q."/>
            <person name="Chen H."/>
            <person name="Cheuk R.F."/>
            <person name="Chin C.W."/>
            <person name="Chung M.K."/>
            <person name="Conn L."/>
            <person name="Conway A.B."/>
            <person name="Conway A.R."/>
            <person name="Creasy T.H."/>
            <person name="Dewar K."/>
            <person name="Dunn P."/>
            <person name="Etgu P."/>
            <person name="Feldblyum T.V."/>
            <person name="Feng J.-D."/>
            <person name="Fong B."/>
            <person name="Fujii C.Y."/>
            <person name="Gill J.E."/>
            <person name="Goldsmith A.D."/>
            <person name="Haas B."/>
            <person name="Hansen N.F."/>
            <person name="Hughes B."/>
            <person name="Huizar L."/>
            <person name="Hunter J.L."/>
            <person name="Jenkins J."/>
            <person name="Johnson-Hopson C."/>
            <person name="Khan S."/>
            <person name="Khaykin E."/>
            <person name="Kim C.J."/>
            <person name="Koo H.L."/>
            <person name="Kremenetskaia I."/>
            <person name="Kurtz D.B."/>
            <person name="Kwan A."/>
            <person name="Lam B."/>
            <person name="Langin-Hooper S."/>
            <person name="Lee A."/>
            <person name="Lee J.M."/>
            <person name="Lenz C.A."/>
            <person name="Li J.H."/>
            <person name="Li Y.-P."/>
            <person name="Lin X."/>
            <person name="Liu S.X."/>
            <person name="Liu Z.A."/>
            <person name="Luros J.S."/>
            <person name="Maiti R."/>
            <person name="Marziali A."/>
            <person name="Militscher J."/>
            <person name="Miranda M."/>
            <person name="Nguyen M."/>
            <person name="Nierman W.C."/>
            <person name="Osborne B.I."/>
            <person name="Pai G."/>
            <person name="Peterson J."/>
            <person name="Pham P.K."/>
            <person name="Rizzo M."/>
            <person name="Rooney T."/>
            <person name="Rowley D."/>
            <person name="Sakano H."/>
            <person name="Salzberg S.L."/>
            <person name="Schwartz J.R."/>
            <person name="Shinn P."/>
            <person name="Southwick A.M."/>
            <person name="Sun H."/>
            <person name="Tallon L.J."/>
            <person name="Tambunga G."/>
            <person name="Toriumi M.J."/>
            <person name="Town C.D."/>
            <person name="Utterback T."/>
            <person name="Van Aken S."/>
            <person name="Vaysberg M."/>
            <person name="Vysotskaia V.S."/>
            <person name="Walker M."/>
            <person name="Wu D."/>
            <person name="Yu G."/>
            <person name="Fraser C.M."/>
            <person name="Venter J.C."/>
            <person name="Davis R.W."/>
        </authorList>
    </citation>
    <scope>NUCLEOTIDE SEQUENCE [LARGE SCALE GENOMIC DNA]</scope>
    <source>
        <strain>cv. Columbia</strain>
    </source>
</reference>
<reference key="2">
    <citation type="journal article" date="2017" name="Plant J.">
        <title>Araport11: a complete reannotation of the Arabidopsis thaliana reference genome.</title>
        <authorList>
            <person name="Cheng C.Y."/>
            <person name="Krishnakumar V."/>
            <person name="Chan A.P."/>
            <person name="Thibaud-Nissen F."/>
            <person name="Schobel S."/>
            <person name="Town C.D."/>
        </authorList>
    </citation>
    <scope>GENOME REANNOTATION</scope>
    <source>
        <strain>cv. Columbia</strain>
    </source>
</reference>
<reference key="3">
    <citation type="submission" date="2004-04" db="EMBL/GenBank/DDBJ databases">
        <authorList>
            <person name="Shinn P."/>
            <person name="Chen H."/>
            <person name="Cheuk R.F."/>
            <person name="Kim C.J."/>
            <person name="Carninci P."/>
            <person name="Hayashizaki Y."/>
            <person name="Ishida J."/>
            <person name="Kamiya A."/>
            <person name="Kawai J."/>
            <person name="Narusaka M."/>
            <person name="Sakurai T."/>
            <person name="Satou M."/>
            <person name="Seki M."/>
            <person name="Shinozaki K."/>
            <person name="Ecker J.R."/>
        </authorList>
    </citation>
    <scope>NUCLEOTIDE SEQUENCE [MRNA]</scope>
</reference>
<reference key="4">
    <citation type="submission" date="2005-03" db="EMBL/GenBank/DDBJ databases">
        <authorList>
            <person name="Totoki Y."/>
            <person name="Seki M."/>
            <person name="Ishida J."/>
            <person name="Nakajima M."/>
            <person name="Enju A."/>
            <person name="Kamiya A."/>
            <person name="Narusaka M."/>
            <person name="Shin-i T."/>
            <person name="Nakagawa M."/>
            <person name="Sakamoto N."/>
            <person name="Oishi K."/>
            <person name="Kohara Y."/>
            <person name="Kobayashi M."/>
            <person name="Toyoda A."/>
            <person name="Sakaki Y."/>
            <person name="Sakurai T."/>
            <person name="Iida K."/>
            <person name="Akiyama K."/>
            <person name="Satou M."/>
            <person name="Toyoda T."/>
            <person name="Konagaya A."/>
            <person name="Carninci P."/>
            <person name="Kawai J."/>
            <person name="Hayashizaki Y."/>
            <person name="Shinozaki K."/>
        </authorList>
    </citation>
    <scope>NUCLEOTIDE SEQUENCE [LARGE SCALE MRNA]</scope>
    <source>
        <strain>cv. Columbia</strain>
    </source>
</reference>
<accession>Q6NKW9</accession>
<accession>Q67XG3</accession>
<accession>Q9XIR7</accession>
<proteinExistence type="evidence at transcript level"/>
<protein>
    <recommendedName>
        <fullName>Glucan endo-1,3-beta-glucosidase 8</fullName>
        <ecNumber>3.2.1.39</ecNumber>
    </recommendedName>
    <alternativeName>
        <fullName>(1-&gt;3)-beta-glucan endohydrolase 8</fullName>
        <shortName>(1-&gt;3)-beta-glucanase 8</shortName>
    </alternativeName>
    <alternativeName>
        <fullName>Beta-1,3-endoglucanase 8</fullName>
        <shortName>Beta-1,3-glucanase 8</shortName>
    </alternativeName>
</protein>
<sequence>MSNLLALVVGFVIVIGHLGILVNGLGVNWGTMATHKLPPKTVVQMLKDNNINKVKLFDADETTMGALAGSGLEVMVAIPNDQLKVMTSYDRAKDWVRKNVTRYNFDGGVNITFVAVGNEPFLKSYNGSFINLTFPALANIQNALNEAGLGNSVKATVPLNADVYDSPASNPVPSAGRFRPDIIGQMTQIVDFLGKNNAPITINIYPFLSLYGNDDFPLNYAFFDGAEPINDNGIDYTNVFDANFDTLVSSLKAVGHGDMPIIVGEVGWPTEGDKHANAGSAYRFYNGLLPRLGTNKGTPLRPTYIEVYLFGLLDEDAKSIAPGPFERHWGIFKFDGQPKFPIDLSGQGQSKFLIGAQNVPYLPNKWCTFNPEAKDLTKLAANIDYACTFSDCTALGYGSSCNTLDANGNASYAFNMFFQVKNQDESACYFQGLATITTQNISQGQCNFPIQIVASSASSFSCSSYSLVVLIVWFLLSGMMF</sequence>
<gene>
    <name type="ordered locus">At1g64760</name>
    <name type="ORF">F13O11.7</name>
</gene>
<keyword id="KW-1003">Cell membrane</keyword>
<keyword id="KW-0134">Cell wall</keyword>
<keyword id="KW-0961">Cell wall biogenesis/degradation</keyword>
<keyword id="KW-1015">Disulfide bond</keyword>
<keyword id="KW-0325">Glycoprotein</keyword>
<keyword id="KW-0326">Glycosidase</keyword>
<keyword id="KW-0336">GPI-anchor</keyword>
<keyword id="KW-0378">Hydrolase</keyword>
<keyword id="KW-0449">Lipoprotein</keyword>
<keyword id="KW-0472">Membrane</keyword>
<keyword id="KW-0611">Plant defense</keyword>
<keyword id="KW-1185">Reference proteome</keyword>
<keyword id="KW-0964">Secreted</keyword>
<keyword id="KW-0732">Signal</keyword>
<comment type="catalytic activity">
    <reaction>
        <text>Hydrolysis of (1-&gt;3)-beta-D-glucosidic linkages in (1-&gt;3)-beta-D-glucans.</text>
        <dbReference type="EC" id="3.2.1.39"/>
    </reaction>
</comment>
<comment type="subcellular location">
    <subcellularLocation>
        <location evidence="4">Secreted</location>
        <location evidence="4">Cell wall</location>
    </subcellularLocation>
    <subcellularLocation>
        <location>Cell membrane</location>
        <topology>Lipid-anchor</topology>
        <topology>GPI-anchor</topology>
        <orientation>Extracellular side</orientation>
    </subcellularLocation>
</comment>
<comment type="PTM">
    <text evidence="1">Contains two additional disulfide bonds.</text>
</comment>
<comment type="similarity">
    <text evidence="4">Belongs to the glycosyl hydrolase 17 family.</text>
</comment>
<comment type="sequence caution" evidence="4">
    <conflict type="erroneous initiation">
        <sequence resource="EMBL-CDS" id="AAD38251"/>
    </conflict>
</comment>
<dbReference type="EC" id="3.2.1.39"/>
<dbReference type="EMBL" id="AC006193">
    <property type="protein sequence ID" value="AAD38251.1"/>
    <property type="status" value="ALT_INIT"/>
    <property type="molecule type" value="Genomic_DNA"/>
</dbReference>
<dbReference type="EMBL" id="CP002684">
    <property type="protein sequence ID" value="AEE34283.1"/>
    <property type="molecule type" value="Genomic_DNA"/>
</dbReference>
<dbReference type="EMBL" id="CP002684">
    <property type="protein sequence ID" value="AEE34284.1"/>
    <property type="molecule type" value="Genomic_DNA"/>
</dbReference>
<dbReference type="EMBL" id="BT012574">
    <property type="protein sequence ID" value="AAS99718.1"/>
    <property type="molecule type" value="mRNA"/>
</dbReference>
<dbReference type="EMBL" id="AK220635">
    <property type="protein sequence ID" value="BAD95084.1"/>
    <property type="molecule type" value="mRNA"/>
</dbReference>
<dbReference type="EMBL" id="AK176856">
    <property type="protein sequence ID" value="BAD44619.1"/>
    <property type="molecule type" value="mRNA"/>
</dbReference>
<dbReference type="EMBL" id="AK175510">
    <property type="protein sequence ID" value="BAD43273.1"/>
    <property type="molecule type" value="mRNA"/>
</dbReference>
<dbReference type="PIR" id="G96670">
    <property type="entry name" value="G96670"/>
</dbReference>
<dbReference type="RefSeq" id="NP_001031232.1">
    <property type="nucleotide sequence ID" value="NM_001036155.3"/>
</dbReference>
<dbReference type="RefSeq" id="NP_176656.1">
    <property type="nucleotide sequence ID" value="NM_105150.3"/>
</dbReference>
<dbReference type="SMR" id="Q6NKW9"/>
<dbReference type="FunCoup" id="Q6NKW9">
    <property type="interactions" value="64"/>
</dbReference>
<dbReference type="STRING" id="3702.Q6NKW9"/>
<dbReference type="CAZy" id="CBM43">
    <property type="family name" value="Carbohydrate-Binding Module Family 43"/>
</dbReference>
<dbReference type="CAZy" id="GH17">
    <property type="family name" value="Glycoside Hydrolase Family 17"/>
</dbReference>
<dbReference type="GlyGen" id="Q6NKW9">
    <property type="glycosylation" value="6 sites"/>
</dbReference>
<dbReference type="PaxDb" id="3702-AT1G64760.2"/>
<dbReference type="ProteomicsDB" id="222028"/>
<dbReference type="EnsemblPlants" id="AT1G64760.1">
    <property type="protein sequence ID" value="AT1G64760.1"/>
    <property type="gene ID" value="AT1G64760"/>
</dbReference>
<dbReference type="EnsemblPlants" id="AT1G64760.2">
    <property type="protein sequence ID" value="AT1G64760.2"/>
    <property type="gene ID" value="AT1G64760"/>
</dbReference>
<dbReference type="GeneID" id="842784"/>
<dbReference type="Gramene" id="AT1G64760.1">
    <property type="protein sequence ID" value="AT1G64760.1"/>
    <property type="gene ID" value="AT1G64760"/>
</dbReference>
<dbReference type="Gramene" id="AT1G64760.2">
    <property type="protein sequence ID" value="AT1G64760.2"/>
    <property type="gene ID" value="AT1G64760"/>
</dbReference>
<dbReference type="KEGG" id="ath:AT1G64760"/>
<dbReference type="Araport" id="AT1G64760"/>
<dbReference type="TAIR" id="AT1G64760">
    <property type="gene designation" value="ZET"/>
</dbReference>
<dbReference type="eggNOG" id="ENOG502QQQS">
    <property type="taxonomic scope" value="Eukaryota"/>
</dbReference>
<dbReference type="HOGENOM" id="CLU_024953_2_0_1"/>
<dbReference type="InParanoid" id="Q6NKW9"/>
<dbReference type="OMA" id="MFNPDAK"/>
<dbReference type="PhylomeDB" id="Q6NKW9"/>
<dbReference type="BioCyc" id="ARA:AT1G64760-MONOMER"/>
<dbReference type="PRO" id="PR:Q6NKW9"/>
<dbReference type="Proteomes" id="UP000006548">
    <property type="component" value="Chromosome 1"/>
</dbReference>
<dbReference type="ExpressionAtlas" id="Q6NKW9">
    <property type="expression patterns" value="baseline and differential"/>
</dbReference>
<dbReference type="GO" id="GO:0048046">
    <property type="term" value="C:apoplast"/>
    <property type="evidence" value="ECO:0000314"/>
    <property type="project" value="TAIR"/>
</dbReference>
<dbReference type="GO" id="GO:0005634">
    <property type="term" value="C:nucleus"/>
    <property type="evidence" value="ECO:0007005"/>
    <property type="project" value="TAIR"/>
</dbReference>
<dbReference type="GO" id="GO:0005886">
    <property type="term" value="C:plasma membrane"/>
    <property type="evidence" value="ECO:0007005"/>
    <property type="project" value="TAIR"/>
</dbReference>
<dbReference type="GO" id="GO:0009506">
    <property type="term" value="C:plasmodesma"/>
    <property type="evidence" value="ECO:0007005"/>
    <property type="project" value="TAIR"/>
</dbReference>
<dbReference type="GO" id="GO:0098552">
    <property type="term" value="C:side of membrane"/>
    <property type="evidence" value="ECO:0007669"/>
    <property type="project" value="UniProtKB-KW"/>
</dbReference>
<dbReference type="GO" id="GO:0042973">
    <property type="term" value="F:glucan endo-1,3-beta-D-glucosidase activity"/>
    <property type="evidence" value="ECO:0007669"/>
    <property type="project" value="UniProtKB-EC"/>
</dbReference>
<dbReference type="GO" id="GO:0005975">
    <property type="term" value="P:carbohydrate metabolic process"/>
    <property type="evidence" value="ECO:0007669"/>
    <property type="project" value="InterPro"/>
</dbReference>
<dbReference type="GO" id="GO:0006952">
    <property type="term" value="P:defense response"/>
    <property type="evidence" value="ECO:0007669"/>
    <property type="project" value="UniProtKB-KW"/>
</dbReference>
<dbReference type="GO" id="GO:0009664">
    <property type="term" value="P:plant-type cell wall organization"/>
    <property type="evidence" value="ECO:0000315"/>
    <property type="project" value="TAIR"/>
</dbReference>
<dbReference type="FunFam" id="3.20.20.80:FF:000008">
    <property type="entry name" value="Glucan endo-1,3-beta-glucosidase 5"/>
    <property type="match status" value="1"/>
</dbReference>
<dbReference type="FunFam" id="1.20.58.1040:FF:000002">
    <property type="entry name" value="Glucan endo-1,3-beta-glucosidase 8"/>
    <property type="match status" value="1"/>
</dbReference>
<dbReference type="Gene3D" id="1.20.58.1040">
    <property type="match status" value="1"/>
</dbReference>
<dbReference type="Gene3D" id="3.20.20.80">
    <property type="entry name" value="Glycosidases"/>
    <property type="match status" value="1"/>
</dbReference>
<dbReference type="InterPro" id="IPR000490">
    <property type="entry name" value="Glyco_hydro_17"/>
</dbReference>
<dbReference type="InterPro" id="IPR044965">
    <property type="entry name" value="Glyco_hydro_17_plant"/>
</dbReference>
<dbReference type="InterPro" id="IPR017853">
    <property type="entry name" value="Glycoside_hydrolase_SF"/>
</dbReference>
<dbReference type="InterPro" id="IPR012946">
    <property type="entry name" value="X8"/>
</dbReference>
<dbReference type="PANTHER" id="PTHR32227">
    <property type="entry name" value="GLUCAN ENDO-1,3-BETA-GLUCOSIDASE BG1-RELATED-RELATED"/>
    <property type="match status" value="1"/>
</dbReference>
<dbReference type="Pfam" id="PF00332">
    <property type="entry name" value="Glyco_hydro_17"/>
    <property type="match status" value="1"/>
</dbReference>
<dbReference type="Pfam" id="PF07983">
    <property type="entry name" value="X8"/>
    <property type="match status" value="1"/>
</dbReference>
<dbReference type="SMART" id="SM00768">
    <property type="entry name" value="X8"/>
    <property type="match status" value="1"/>
</dbReference>
<dbReference type="SUPFAM" id="SSF51445">
    <property type="entry name" value="(Trans)glycosidases"/>
    <property type="match status" value="1"/>
</dbReference>
<dbReference type="PROSITE" id="PS00587">
    <property type="entry name" value="GLYCOSYL_HYDROL_F17"/>
    <property type="match status" value="1"/>
</dbReference>
<feature type="signal peptide" evidence="3">
    <location>
        <begin position="1"/>
        <end position="33"/>
    </location>
</feature>
<feature type="chain" id="PRO_0000251255" description="Glucan endo-1,3-beta-glucosidase 8">
    <location>
        <begin position="34"/>
        <end position="455"/>
    </location>
</feature>
<feature type="propeptide" id="PRO_0000251256" description="Removed in mature form" evidence="3">
    <location>
        <begin position="456"/>
        <end position="481"/>
    </location>
</feature>
<feature type="active site" description="Proton donor" evidence="2">
    <location>
        <position position="119"/>
    </location>
</feature>
<feature type="active site" description="Nucleophile" evidence="2">
    <location>
        <position position="265"/>
    </location>
</feature>
<feature type="lipid moiety-binding region" description="GPI-anchor amidated serine" evidence="3">
    <location>
        <position position="455"/>
    </location>
</feature>
<feature type="glycosylation site" description="N-linked (GlcNAc...) asparagine" evidence="3">
    <location>
        <position position="99"/>
    </location>
</feature>
<feature type="glycosylation site" description="N-linked (GlcNAc...) asparagine" evidence="3">
    <location>
        <position position="110"/>
    </location>
</feature>
<feature type="glycosylation site" description="N-linked (GlcNAc...) asparagine" evidence="3">
    <location>
        <position position="126"/>
    </location>
</feature>
<feature type="glycosylation site" description="N-linked (GlcNAc...) asparagine" evidence="3">
    <location>
        <position position="131"/>
    </location>
</feature>
<feature type="glycosylation site" description="N-linked (GlcNAc...) asparagine" evidence="3">
    <location>
        <position position="409"/>
    </location>
</feature>
<feature type="glycosylation site" description="N-linked (GlcNAc...) asparagine" evidence="3">
    <location>
        <position position="440"/>
    </location>
</feature>
<feature type="disulfide bond" evidence="1">
    <location>
        <begin position="367"/>
        <end position="428"/>
    </location>
</feature>
<feature type="sequence conflict" description="In Ref. 3; AAS99718 and 4; BAD95084." evidence="4" ref="3 4">
    <original>W</original>
    <variation>L</variation>
    <location>
        <position position="95"/>
    </location>
</feature>
<feature type="sequence conflict" description="In Ref. 3; AAS99718 and 4; BAD95084." evidence="4" ref="3 4">
    <original>N</original>
    <variation>H</variation>
    <location>
        <position position="358"/>
    </location>
</feature>
<organism>
    <name type="scientific">Arabidopsis thaliana</name>
    <name type="common">Mouse-ear cress</name>
    <dbReference type="NCBI Taxonomy" id="3702"/>
    <lineage>
        <taxon>Eukaryota</taxon>
        <taxon>Viridiplantae</taxon>
        <taxon>Streptophyta</taxon>
        <taxon>Embryophyta</taxon>
        <taxon>Tracheophyta</taxon>
        <taxon>Spermatophyta</taxon>
        <taxon>Magnoliopsida</taxon>
        <taxon>eudicotyledons</taxon>
        <taxon>Gunneridae</taxon>
        <taxon>Pentapetalae</taxon>
        <taxon>rosids</taxon>
        <taxon>malvids</taxon>
        <taxon>Brassicales</taxon>
        <taxon>Brassicaceae</taxon>
        <taxon>Camelineae</taxon>
        <taxon>Arabidopsis</taxon>
    </lineage>
</organism>
<name>E138_ARATH</name>